<gene>
    <name evidence="1" type="primary">hslO</name>
    <name type="ordered locus">SPT_2203</name>
</gene>
<proteinExistence type="inferred from homology"/>
<protein>
    <recommendedName>
        <fullName evidence="1">33 kDa chaperonin</fullName>
    </recommendedName>
    <alternativeName>
        <fullName evidence="1">Heat shock protein 33 homolog</fullName>
        <shortName evidence="1">HSP33</shortName>
    </alternativeName>
</protein>
<reference key="1">
    <citation type="journal article" date="2010" name="Genome Biol.">
        <title>Structure and dynamics of the pan-genome of Streptococcus pneumoniae and closely related species.</title>
        <authorList>
            <person name="Donati C."/>
            <person name="Hiller N.L."/>
            <person name="Tettelin H."/>
            <person name="Muzzi A."/>
            <person name="Croucher N.J."/>
            <person name="Angiuoli S.V."/>
            <person name="Oggioni M."/>
            <person name="Dunning Hotopp J.C."/>
            <person name="Hu F.Z."/>
            <person name="Riley D.R."/>
            <person name="Covacci A."/>
            <person name="Mitchell T.J."/>
            <person name="Bentley S.D."/>
            <person name="Kilian M."/>
            <person name="Ehrlich G.D."/>
            <person name="Rappuoli R."/>
            <person name="Moxon E.R."/>
            <person name="Masignani V."/>
        </authorList>
    </citation>
    <scope>NUCLEOTIDE SEQUENCE [LARGE SCALE GENOMIC DNA]</scope>
    <source>
        <strain>Taiwan19F-14</strain>
    </source>
</reference>
<feature type="chain" id="PRO_1000119270" description="33 kDa chaperonin">
    <location>
        <begin position="1"/>
        <end position="290"/>
    </location>
</feature>
<feature type="disulfide bond" description="Redox-active" evidence="1">
    <location>
        <begin position="235"/>
        <end position="237"/>
    </location>
</feature>
<feature type="disulfide bond" description="Redox-active" evidence="1">
    <location>
        <begin position="268"/>
        <end position="271"/>
    </location>
</feature>
<accession>C1CUA5</accession>
<comment type="function">
    <text evidence="1">Redox regulated molecular chaperone. Protects both thermally unfolding and oxidatively damaged proteins from irreversible aggregation. Plays an important role in the bacterial defense system toward oxidative stress.</text>
</comment>
<comment type="subcellular location">
    <subcellularLocation>
        <location evidence="1">Cytoplasm</location>
    </subcellularLocation>
</comment>
<comment type="PTM">
    <text evidence="1">Under oxidizing conditions two disulfide bonds are formed involving the reactive cysteines. Under reducing conditions zinc is bound to the reactive cysteines and the protein is inactive.</text>
</comment>
<comment type="similarity">
    <text evidence="1">Belongs to the HSP33 family.</text>
</comment>
<evidence type="ECO:0000255" key="1">
    <source>
        <dbReference type="HAMAP-Rule" id="MF_00117"/>
    </source>
</evidence>
<dbReference type="EMBL" id="CP000921">
    <property type="protein sequence ID" value="ACO24124.1"/>
    <property type="molecule type" value="Genomic_DNA"/>
</dbReference>
<dbReference type="RefSeq" id="WP_000357847.1">
    <property type="nucleotide sequence ID" value="NC_012469.1"/>
</dbReference>
<dbReference type="SMR" id="C1CUA5"/>
<dbReference type="KEGG" id="snt:SPT_2203"/>
<dbReference type="HOGENOM" id="CLU_054493_1_0_9"/>
<dbReference type="GO" id="GO:0005737">
    <property type="term" value="C:cytoplasm"/>
    <property type="evidence" value="ECO:0007669"/>
    <property type="project" value="UniProtKB-SubCell"/>
</dbReference>
<dbReference type="GO" id="GO:0044183">
    <property type="term" value="F:protein folding chaperone"/>
    <property type="evidence" value="ECO:0007669"/>
    <property type="project" value="TreeGrafter"/>
</dbReference>
<dbReference type="GO" id="GO:0051082">
    <property type="term" value="F:unfolded protein binding"/>
    <property type="evidence" value="ECO:0007669"/>
    <property type="project" value="UniProtKB-UniRule"/>
</dbReference>
<dbReference type="GO" id="GO:0042026">
    <property type="term" value="P:protein refolding"/>
    <property type="evidence" value="ECO:0007669"/>
    <property type="project" value="TreeGrafter"/>
</dbReference>
<dbReference type="CDD" id="cd00498">
    <property type="entry name" value="Hsp33"/>
    <property type="match status" value="1"/>
</dbReference>
<dbReference type="Gene3D" id="3.55.30.10">
    <property type="entry name" value="Hsp33 domain"/>
    <property type="match status" value="1"/>
</dbReference>
<dbReference type="Gene3D" id="3.90.1280.10">
    <property type="entry name" value="HSP33 redox switch-like"/>
    <property type="match status" value="1"/>
</dbReference>
<dbReference type="HAMAP" id="MF_00117">
    <property type="entry name" value="HslO"/>
    <property type="match status" value="1"/>
</dbReference>
<dbReference type="InterPro" id="IPR000397">
    <property type="entry name" value="Heat_shock_Hsp33"/>
</dbReference>
<dbReference type="InterPro" id="IPR016154">
    <property type="entry name" value="Heat_shock_Hsp33_C"/>
</dbReference>
<dbReference type="InterPro" id="IPR016153">
    <property type="entry name" value="Heat_shock_Hsp33_N"/>
</dbReference>
<dbReference type="NCBIfam" id="NF001033">
    <property type="entry name" value="PRK00114.1"/>
    <property type="match status" value="1"/>
</dbReference>
<dbReference type="PANTHER" id="PTHR30111">
    <property type="entry name" value="33 KDA CHAPERONIN"/>
    <property type="match status" value="1"/>
</dbReference>
<dbReference type="PANTHER" id="PTHR30111:SF1">
    <property type="entry name" value="33 KDA CHAPERONIN"/>
    <property type="match status" value="1"/>
</dbReference>
<dbReference type="Pfam" id="PF01430">
    <property type="entry name" value="HSP33"/>
    <property type="match status" value="1"/>
</dbReference>
<dbReference type="PIRSF" id="PIRSF005261">
    <property type="entry name" value="Heat_shock_Hsp33"/>
    <property type="match status" value="1"/>
</dbReference>
<dbReference type="SUPFAM" id="SSF64397">
    <property type="entry name" value="Hsp33 domain"/>
    <property type="match status" value="1"/>
</dbReference>
<dbReference type="SUPFAM" id="SSF118352">
    <property type="entry name" value="HSP33 redox switch-like"/>
    <property type="match status" value="1"/>
</dbReference>
<keyword id="KW-0143">Chaperone</keyword>
<keyword id="KW-0963">Cytoplasm</keyword>
<keyword id="KW-1015">Disulfide bond</keyword>
<keyword id="KW-0676">Redox-active center</keyword>
<keyword id="KW-0862">Zinc</keyword>
<organism>
    <name type="scientific">Streptococcus pneumoniae (strain Taiwan19F-14)</name>
    <dbReference type="NCBI Taxonomy" id="487213"/>
    <lineage>
        <taxon>Bacteria</taxon>
        <taxon>Bacillati</taxon>
        <taxon>Bacillota</taxon>
        <taxon>Bacilli</taxon>
        <taxon>Lactobacillales</taxon>
        <taxon>Streptococcaceae</taxon>
        <taxon>Streptococcus</taxon>
    </lineage>
</organism>
<name>HSLO_STRZT</name>
<sequence length="290" mass="31663">MDKIIKTISESGAFRAFVLDSTETVRTAQEKHQTQASSTVALGRTLIASQILAANEKGNTKLTVKVLGSSSLGAIITVADTKGNVKGYVQNPGVDIKKTATGEVLVGPFVGNGQFLVITDYGTGNPYNSITPLISGEIGEDLAFYLTESQQTPSAVGLNVLLDEEDKVKVAGGFLVQVLPGAKKEEIARFEKRIQEMPAISTLLESDDHIEALLKAIYGDEAYKRLSEEEIRFQCDCSHERFMNALASLPSSDLQEMKEEDHGAEITCQFCQTTYNFDEKDLEELIRDKS</sequence>